<gene>
    <name evidence="1" type="primary">rlmL</name>
    <name type="ordered locus">Smal_1322</name>
</gene>
<comment type="function">
    <text evidence="1">Specifically methylates the guanine in position 2445 (m2G2445) and the guanine in position 2069 (m7G2069) of 23S rRNA.</text>
</comment>
<comment type="catalytic activity">
    <reaction evidence="1">
        <text>guanosine(2445) in 23S rRNA + S-adenosyl-L-methionine = N(2)-methylguanosine(2445) in 23S rRNA + S-adenosyl-L-homocysteine + H(+)</text>
        <dbReference type="Rhea" id="RHEA:42740"/>
        <dbReference type="Rhea" id="RHEA-COMP:10215"/>
        <dbReference type="Rhea" id="RHEA-COMP:10216"/>
        <dbReference type="ChEBI" id="CHEBI:15378"/>
        <dbReference type="ChEBI" id="CHEBI:57856"/>
        <dbReference type="ChEBI" id="CHEBI:59789"/>
        <dbReference type="ChEBI" id="CHEBI:74269"/>
        <dbReference type="ChEBI" id="CHEBI:74481"/>
        <dbReference type="EC" id="2.1.1.173"/>
    </reaction>
</comment>
<comment type="catalytic activity">
    <reaction evidence="1">
        <text>guanosine(2069) in 23S rRNA + S-adenosyl-L-methionine = N(2)-methylguanosine(2069) in 23S rRNA + S-adenosyl-L-homocysteine + H(+)</text>
        <dbReference type="Rhea" id="RHEA:43772"/>
        <dbReference type="Rhea" id="RHEA-COMP:10688"/>
        <dbReference type="Rhea" id="RHEA-COMP:10689"/>
        <dbReference type="ChEBI" id="CHEBI:15378"/>
        <dbReference type="ChEBI" id="CHEBI:57856"/>
        <dbReference type="ChEBI" id="CHEBI:59789"/>
        <dbReference type="ChEBI" id="CHEBI:74269"/>
        <dbReference type="ChEBI" id="CHEBI:74481"/>
        <dbReference type="EC" id="2.1.1.264"/>
    </reaction>
</comment>
<comment type="subcellular location">
    <subcellularLocation>
        <location evidence="1">Cytoplasm</location>
    </subcellularLocation>
</comment>
<comment type="similarity">
    <text evidence="1">Belongs to the methyltransferase superfamily. RlmKL family.</text>
</comment>
<protein>
    <recommendedName>
        <fullName evidence="1">Ribosomal RNA large subunit methyltransferase K/L</fullName>
    </recommendedName>
    <domain>
        <recommendedName>
            <fullName evidence="1">23S rRNA m2G2445 methyltransferase</fullName>
            <ecNumber evidence="1">2.1.1.173</ecNumber>
        </recommendedName>
        <alternativeName>
            <fullName evidence="1">rRNA (guanine-N(2)-)-methyltransferase RlmL</fullName>
        </alternativeName>
    </domain>
    <domain>
        <recommendedName>
            <fullName evidence="1">23S rRNA m7G2069 methyltransferase</fullName>
            <ecNumber evidence="1">2.1.1.264</ecNumber>
        </recommendedName>
        <alternativeName>
            <fullName evidence="1">rRNA (guanine-N(7)-)-methyltransferase RlmK</fullName>
        </alternativeName>
    </domain>
</protein>
<feature type="chain" id="PRO_0000366844" description="Ribosomal RNA large subunit methyltransferase K/L">
    <location>
        <begin position="1"/>
        <end position="712"/>
    </location>
</feature>
<feature type="domain" description="THUMP" evidence="1">
    <location>
        <begin position="42"/>
        <end position="153"/>
    </location>
</feature>
<accession>B4SQ79</accession>
<sequence length="712" mass="78496">MKFFVSCAKGLEYLLADELSALGLEKATATIAGVNAEGELEQALRIVMWSRLASRVLWPIDAFECPDEQALYDGVRALPWHEHIKPEMTLAVDAHVSGDKITHARFAAQRIKDAIVDRMRDEGLERPSVNTDLPDVRVNLSLRKGRASLSIDLGGGSLHRRGWRGAAHEAPLKENLAAALLLRAQWPRLHAAGGGLLDPMCGSGTLLIEGALMAADVAPGLMRHGSLPPSRWLGFDKAAWKAIQSEARDREAAGLAALKPVIHGSDIDPTAIQAARENAEVAGVAHAIRFTRADVADLAAPEQEIGAVVCNPPYDERLAADPALYRALGNALQKAVPQWRASLLCGNDELAFATGLRAGKKYQMFNGALECALIICDPIAVPGRDPAQPRELSEGAQMVANRLRKNLKKFKSWRAREDITCFRAYDADLPEYAAAIDVYEEDGGQRRTFLHVQEYAAPAAIPENDVRRRRNELLAAAREVFGVPPEQVSMKSRERGKGGSKYGRFEQRDEFIVVRENNALLQVNLFDYLDTGLFLDHRPLRRMMAEQALGKRFLNLFCYTGVASVQAAVAGAASTTSVDLSATYLQWCYDNLALNGQGGNQHLLVQADAMAWLEGDRGQYDVIFCDPPTFSNSARADDFDVQREQLKLLRAAVARLAPGGVLYFSNNFRRFKLEENAIAEFAQCREITARTIGPDFERNARIHRAWELKRLG</sequence>
<evidence type="ECO:0000255" key="1">
    <source>
        <dbReference type="HAMAP-Rule" id="MF_01858"/>
    </source>
</evidence>
<dbReference type="EC" id="2.1.1.173" evidence="1"/>
<dbReference type="EC" id="2.1.1.264" evidence="1"/>
<dbReference type="EMBL" id="CP001111">
    <property type="protein sequence ID" value="ACF51027.1"/>
    <property type="molecule type" value="Genomic_DNA"/>
</dbReference>
<dbReference type="RefSeq" id="WP_012510557.1">
    <property type="nucleotide sequence ID" value="NC_011071.1"/>
</dbReference>
<dbReference type="SMR" id="B4SQ79"/>
<dbReference type="STRING" id="391008.Smal_1322"/>
<dbReference type="KEGG" id="smt:Smal_1322"/>
<dbReference type="eggNOG" id="COG0116">
    <property type="taxonomic scope" value="Bacteria"/>
</dbReference>
<dbReference type="eggNOG" id="COG1092">
    <property type="taxonomic scope" value="Bacteria"/>
</dbReference>
<dbReference type="HOGENOM" id="CLU_014042_2_0_6"/>
<dbReference type="OrthoDB" id="9809404at2"/>
<dbReference type="Proteomes" id="UP000001867">
    <property type="component" value="Chromosome"/>
</dbReference>
<dbReference type="GO" id="GO:0005737">
    <property type="term" value="C:cytoplasm"/>
    <property type="evidence" value="ECO:0007669"/>
    <property type="project" value="UniProtKB-SubCell"/>
</dbReference>
<dbReference type="GO" id="GO:0052915">
    <property type="term" value="F:23S rRNA (guanine(2445)-N(2))-methyltransferase activity"/>
    <property type="evidence" value="ECO:0007669"/>
    <property type="project" value="UniProtKB-UniRule"/>
</dbReference>
<dbReference type="GO" id="GO:0003723">
    <property type="term" value="F:RNA binding"/>
    <property type="evidence" value="ECO:0007669"/>
    <property type="project" value="UniProtKB-KW"/>
</dbReference>
<dbReference type="GO" id="GO:0070043">
    <property type="term" value="F:rRNA (guanine-N7-)-methyltransferase activity"/>
    <property type="evidence" value="ECO:0007669"/>
    <property type="project" value="UniProtKB-UniRule"/>
</dbReference>
<dbReference type="CDD" id="cd02440">
    <property type="entry name" value="AdoMet_MTases"/>
    <property type="match status" value="1"/>
</dbReference>
<dbReference type="CDD" id="cd11715">
    <property type="entry name" value="THUMP_AdoMetMT"/>
    <property type="match status" value="1"/>
</dbReference>
<dbReference type="FunFam" id="3.30.750.80:FF:000003">
    <property type="entry name" value="Ribosomal RNA large subunit methyltransferase K/L"/>
    <property type="match status" value="1"/>
</dbReference>
<dbReference type="Gene3D" id="3.30.2130.30">
    <property type="match status" value="1"/>
</dbReference>
<dbReference type="Gene3D" id="3.30.750.80">
    <property type="entry name" value="RNA methyltransferase domain (HRMD) like"/>
    <property type="match status" value="1"/>
</dbReference>
<dbReference type="Gene3D" id="3.40.50.150">
    <property type="entry name" value="Vaccinia Virus protein VP39"/>
    <property type="match status" value="2"/>
</dbReference>
<dbReference type="HAMAP" id="MF_01858">
    <property type="entry name" value="23SrRNA_methyltr_KL"/>
    <property type="match status" value="1"/>
</dbReference>
<dbReference type="InterPro" id="IPR017244">
    <property type="entry name" value="23SrRNA_methyltr_KL"/>
</dbReference>
<dbReference type="InterPro" id="IPR002052">
    <property type="entry name" value="DNA_methylase_N6_adenine_CS"/>
</dbReference>
<dbReference type="InterPro" id="IPR000241">
    <property type="entry name" value="RlmKL-like_Mtase"/>
</dbReference>
<dbReference type="InterPro" id="IPR053943">
    <property type="entry name" value="RlmKL-like_Mtase_CS"/>
</dbReference>
<dbReference type="InterPro" id="IPR054170">
    <property type="entry name" value="RlmL_1st"/>
</dbReference>
<dbReference type="InterPro" id="IPR019614">
    <property type="entry name" value="SAM-dep_methyl-trfase"/>
</dbReference>
<dbReference type="InterPro" id="IPR029063">
    <property type="entry name" value="SAM-dependent_MTases_sf"/>
</dbReference>
<dbReference type="InterPro" id="IPR004114">
    <property type="entry name" value="THUMP_dom"/>
</dbReference>
<dbReference type="NCBIfam" id="NF008748">
    <property type="entry name" value="PRK11783.1"/>
    <property type="match status" value="1"/>
</dbReference>
<dbReference type="PANTHER" id="PTHR47313">
    <property type="entry name" value="RIBOSOMAL RNA LARGE SUBUNIT METHYLTRANSFERASE K/L"/>
    <property type="match status" value="1"/>
</dbReference>
<dbReference type="PANTHER" id="PTHR47313:SF1">
    <property type="entry name" value="RIBOSOMAL RNA LARGE SUBUNIT METHYLTRANSFERASE K_L"/>
    <property type="match status" value="1"/>
</dbReference>
<dbReference type="Pfam" id="PF10672">
    <property type="entry name" value="Methyltrans_SAM"/>
    <property type="match status" value="1"/>
</dbReference>
<dbReference type="Pfam" id="PF22020">
    <property type="entry name" value="RlmL_1st"/>
    <property type="match status" value="1"/>
</dbReference>
<dbReference type="Pfam" id="PF02926">
    <property type="entry name" value="THUMP"/>
    <property type="match status" value="1"/>
</dbReference>
<dbReference type="Pfam" id="PF01170">
    <property type="entry name" value="UPF0020"/>
    <property type="match status" value="1"/>
</dbReference>
<dbReference type="PIRSF" id="PIRSF037618">
    <property type="entry name" value="RNA_Mtase_bacteria_prd"/>
    <property type="match status" value="1"/>
</dbReference>
<dbReference type="SMART" id="SM00981">
    <property type="entry name" value="THUMP"/>
    <property type="match status" value="1"/>
</dbReference>
<dbReference type="SUPFAM" id="SSF53335">
    <property type="entry name" value="S-adenosyl-L-methionine-dependent methyltransferases"/>
    <property type="match status" value="2"/>
</dbReference>
<dbReference type="PROSITE" id="PS51165">
    <property type="entry name" value="THUMP"/>
    <property type="match status" value="1"/>
</dbReference>
<dbReference type="PROSITE" id="PS01261">
    <property type="entry name" value="UPF0020"/>
    <property type="match status" value="1"/>
</dbReference>
<organism>
    <name type="scientific">Stenotrophomonas maltophilia (strain R551-3)</name>
    <dbReference type="NCBI Taxonomy" id="391008"/>
    <lineage>
        <taxon>Bacteria</taxon>
        <taxon>Pseudomonadati</taxon>
        <taxon>Pseudomonadota</taxon>
        <taxon>Gammaproteobacteria</taxon>
        <taxon>Lysobacterales</taxon>
        <taxon>Lysobacteraceae</taxon>
        <taxon>Stenotrophomonas</taxon>
        <taxon>Stenotrophomonas maltophilia group</taxon>
    </lineage>
</organism>
<proteinExistence type="inferred from homology"/>
<reference key="1">
    <citation type="submission" date="2008-06" db="EMBL/GenBank/DDBJ databases">
        <title>Complete sequence of Stenotrophomonas maltophilia R551-3.</title>
        <authorList>
            <consortium name="US DOE Joint Genome Institute"/>
            <person name="Lucas S."/>
            <person name="Copeland A."/>
            <person name="Lapidus A."/>
            <person name="Glavina del Rio T."/>
            <person name="Dalin E."/>
            <person name="Tice H."/>
            <person name="Pitluck S."/>
            <person name="Chain P."/>
            <person name="Malfatti S."/>
            <person name="Shin M."/>
            <person name="Vergez L."/>
            <person name="Lang D."/>
            <person name="Schmutz J."/>
            <person name="Larimer F."/>
            <person name="Land M."/>
            <person name="Hauser L."/>
            <person name="Kyrpides N."/>
            <person name="Mikhailova N."/>
            <person name="Taghavi S."/>
            <person name="Monchy S."/>
            <person name="Newman L."/>
            <person name="Vangronsveld J."/>
            <person name="van der Lelie D."/>
            <person name="Richardson P."/>
        </authorList>
    </citation>
    <scope>NUCLEOTIDE SEQUENCE [LARGE SCALE GENOMIC DNA]</scope>
    <source>
        <strain>R551-3</strain>
    </source>
</reference>
<name>RLMKL_STRM5</name>
<keyword id="KW-0963">Cytoplasm</keyword>
<keyword id="KW-0489">Methyltransferase</keyword>
<keyword id="KW-0694">RNA-binding</keyword>
<keyword id="KW-0698">rRNA processing</keyword>
<keyword id="KW-0949">S-adenosyl-L-methionine</keyword>
<keyword id="KW-0808">Transferase</keyword>